<organism>
    <name type="scientific">Vibrio campbellii (strain ATCC BAA-1116)</name>
    <dbReference type="NCBI Taxonomy" id="2902295"/>
    <lineage>
        <taxon>Bacteria</taxon>
        <taxon>Pseudomonadati</taxon>
        <taxon>Pseudomonadota</taxon>
        <taxon>Gammaproteobacteria</taxon>
        <taxon>Vibrionales</taxon>
        <taxon>Vibrionaceae</taxon>
        <taxon>Vibrio</taxon>
    </lineage>
</organism>
<evidence type="ECO:0000255" key="1"/>
<evidence type="ECO:0000255" key="2">
    <source>
        <dbReference type="HAMAP-Rule" id="MF_00684"/>
    </source>
</evidence>
<feature type="chain" id="PRO_1000044963" description="N(4)-acetylcytidine amidohydrolase">
    <location>
        <begin position="1"/>
        <end position="106"/>
    </location>
</feature>
<feature type="domain" description="ASCH" evidence="1">
    <location>
        <begin position="9"/>
        <end position="105"/>
    </location>
</feature>
<feature type="active site" description="Proton acceptor" evidence="2">
    <location>
        <position position="23"/>
    </location>
</feature>
<feature type="active site" description="Nucleophile" evidence="2">
    <location>
        <position position="26"/>
    </location>
</feature>
<feature type="active site" description="Proton donor" evidence="2">
    <location>
        <position position="76"/>
    </location>
</feature>
<accession>A7N681</accession>
<protein>
    <recommendedName>
        <fullName evidence="2">N(4)-acetylcytidine amidohydrolase</fullName>
        <shortName evidence="2">ac4C amidohydrolase</shortName>
        <ecNumber evidence="2">3.5.1.135</ecNumber>
    </recommendedName>
</protein>
<gene>
    <name type="ordered locus">VIBHAR_05196</name>
</gene>
<reference key="1">
    <citation type="submission" date="2007-08" db="EMBL/GenBank/DDBJ databases">
        <authorList>
            <consortium name="The Vibrio harveyi Genome Sequencing Project"/>
            <person name="Bassler B."/>
            <person name="Clifton S.W."/>
            <person name="Fulton L."/>
            <person name="Delehaunty K."/>
            <person name="Fronick C."/>
            <person name="Harrison M."/>
            <person name="Markivic C."/>
            <person name="Fulton R."/>
            <person name="Tin-Wollam A.-M."/>
            <person name="Shah N."/>
            <person name="Pepin K."/>
            <person name="Nash W."/>
            <person name="Thiruvilangam P."/>
            <person name="Bhonagiri V."/>
            <person name="Waters C."/>
            <person name="Tu K.C."/>
            <person name="Irgon J."/>
            <person name="Wilson R.K."/>
        </authorList>
    </citation>
    <scope>NUCLEOTIDE SEQUENCE [LARGE SCALE GENOMIC DNA]</scope>
    <source>
        <strain>ATCC BAA-1116 / BB120</strain>
    </source>
</reference>
<proteinExistence type="inferred from homology"/>
<keyword id="KW-0378">Hydrolase</keyword>
<comment type="function">
    <text evidence="2">Catalyzes the hydrolysis of N(4)-acetylcytidine (ac4C).</text>
</comment>
<comment type="catalytic activity">
    <reaction evidence="2">
        <text>N(4)-acetylcytidine + H2O = cytidine + acetate + H(+)</text>
        <dbReference type="Rhea" id="RHEA:62932"/>
        <dbReference type="ChEBI" id="CHEBI:15377"/>
        <dbReference type="ChEBI" id="CHEBI:15378"/>
        <dbReference type="ChEBI" id="CHEBI:17562"/>
        <dbReference type="ChEBI" id="CHEBI:30089"/>
        <dbReference type="ChEBI" id="CHEBI:70989"/>
        <dbReference type="EC" id="3.5.1.135"/>
    </reaction>
</comment>
<comment type="catalytic activity">
    <reaction evidence="2">
        <text>N(4)-acetyl-2'-deoxycytidine + H2O = 2'-deoxycytidine + acetate + H(+)</text>
        <dbReference type="Rhea" id="RHEA:62936"/>
        <dbReference type="ChEBI" id="CHEBI:15377"/>
        <dbReference type="ChEBI" id="CHEBI:15378"/>
        <dbReference type="ChEBI" id="CHEBI:15698"/>
        <dbReference type="ChEBI" id="CHEBI:30089"/>
        <dbReference type="ChEBI" id="CHEBI:146133"/>
        <dbReference type="EC" id="3.5.1.135"/>
    </reaction>
</comment>
<comment type="catalytic activity">
    <reaction evidence="2">
        <text>N(4)-acetylcytosine + H2O = cytosine + acetate + H(+)</text>
        <dbReference type="Rhea" id="RHEA:62940"/>
        <dbReference type="ChEBI" id="CHEBI:15377"/>
        <dbReference type="ChEBI" id="CHEBI:15378"/>
        <dbReference type="ChEBI" id="CHEBI:16040"/>
        <dbReference type="ChEBI" id="CHEBI:30089"/>
        <dbReference type="ChEBI" id="CHEBI:146134"/>
        <dbReference type="EC" id="3.5.1.135"/>
    </reaction>
</comment>
<comment type="similarity">
    <text evidence="2">Belongs to the N(4)-acetylcytidine amidohydrolase family.</text>
</comment>
<name>AC4CH_VIBC1</name>
<dbReference type="EC" id="3.5.1.135" evidence="2"/>
<dbReference type="EMBL" id="CP000790">
    <property type="protein sequence ID" value="ABU73102.1"/>
    <property type="molecule type" value="Genomic_DNA"/>
</dbReference>
<dbReference type="SMR" id="A7N681"/>
<dbReference type="KEGG" id="vha:VIBHAR_05196"/>
<dbReference type="PATRIC" id="fig|338187.25.peg.5026"/>
<dbReference type="Proteomes" id="UP000008152">
    <property type="component" value="Chromosome II"/>
</dbReference>
<dbReference type="GO" id="GO:0005829">
    <property type="term" value="C:cytosol"/>
    <property type="evidence" value="ECO:0007669"/>
    <property type="project" value="TreeGrafter"/>
</dbReference>
<dbReference type="GO" id="GO:0016813">
    <property type="term" value="F:hydrolase activity, acting on carbon-nitrogen (but not peptide) bonds, in linear amidines"/>
    <property type="evidence" value="ECO:0007669"/>
    <property type="project" value="UniProtKB-UniRule"/>
</dbReference>
<dbReference type="GO" id="GO:0106251">
    <property type="term" value="F:N4-acetylcytidine amidohydrolase activity"/>
    <property type="evidence" value="ECO:0007669"/>
    <property type="project" value="RHEA"/>
</dbReference>
<dbReference type="CDD" id="cd06552">
    <property type="entry name" value="ASCH_yqfb_like"/>
    <property type="match status" value="1"/>
</dbReference>
<dbReference type="Gene3D" id="2.30.130.30">
    <property type="entry name" value="Hypothetical protein"/>
    <property type="match status" value="1"/>
</dbReference>
<dbReference type="HAMAP" id="MF_00684">
    <property type="entry name" value="ac4C_amidohydr"/>
    <property type="match status" value="1"/>
</dbReference>
<dbReference type="InterPro" id="IPR008314">
    <property type="entry name" value="AC4CH"/>
</dbReference>
<dbReference type="InterPro" id="IPR007374">
    <property type="entry name" value="ASCH_domain"/>
</dbReference>
<dbReference type="InterPro" id="IPR015947">
    <property type="entry name" value="PUA-like_sf"/>
</dbReference>
<dbReference type="NCBIfam" id="NF003443">
    <property type="entry name" value="PRK04980.1"/>
    <property type="match status" value="1"/>
</dbReference>
<dbReference type="PANTHER" id="PTHR38088">
    <property type="entry name" value="UCP029143 FAMILY PROTEIN"/>
    <property type="match status" value="1"/>
</dbReference>
<dbReference type="PANTHER" id="PTHR38088:SF2">
    <property type="entry name" value="UCP029143 FAMILY PROTEIN"/>
    <property type="match status" value="1"/>
</dbReference>
<dbReference type="Pfam" id="PF04266">
    <property type="entry name" value="ASCH"/>
    <property type="match status" value="1"/>
</dbReference>
<dbReference type="PIRSF" id="PIRSF029143">
    <property type="entry name" value="UCP029143"/>
    <property type="match status" value="1"/>
</dbReference>
<dbReference type="SMART" id="SM01022">
    <property type="entry name" value="ASCH"/>
    <property type="match status" value="1"/>
</dbReference>
<dbReference type="SUPFAM" id="SSF88697">
    <property type="entry name" value="PUA domain-like"/>
    <property type="match status" value="1"/>
</dbReference>
<sequence length="106" mass="12385">MSSHPTKITFFEFLTPLITAGKKTITIRDESESHYVPNTEVEVFTLETDRKVCDIKILSVAPLKFDDINEFHAEQEAIELPKLKELIREIYPNINELYVIEYELIK</sequence>